<protein>
    <recommendedName>
        <fullName evidence="1">Aspartate carbamoyltransferase catalytic subunit</fullName>
        <ecNumber evidence="1">2.1.3.2</ecNumber>
    </recommendedName>
    <alternativeName>
        <fullName evidence="1">Aspartate transcarbamylase</fullName>
        <shortName evidence="1">ATCase</shortName>
    </alternativeName>
</protein>
<dbReference type="EC" id="2.1.3.2" evidence="1"/>
<dbReference type="EMBL" id="CP000410">
    <property type="protein sequence ID" value="ABJ55115.1"/>
    <property type="molecule type" value="Genomic_DNA"/>
</dbReference>
<dbReference type="RefSeq" id="WP_001293822.1">
    <property type="nucleotide sequence ID" value="NZ_JAMLJR010000006.1"/>
</dbReference>
<dbReference type="SMR" id="Q04K46"/>
<dbReference type="PaxDb" id="373153-SPD_1133"/>
<dbReference type="KEGG" id="spd:SPD_1133"/>
<dbReference type="eggNOG" id="COG0540">
    <property type="taxonomic scope" value="Bacteria"/>
</dbReference>
<dbReference type="HOGENOM" id="CLU_043846_2_1_9"/>
<dbReference type="BioCyc" id="SPNE373153:G1G6V-1224-MONOMER"/>
<dbReference type="UniPathway" id="UPA00070">
    <property type="reaction ID" value="UER00116"/>
</dbReference>
<dbReference type="Proteomes" id="UP000001452">
    <property type="component" value="Chromosome"/>
</dbReference>
<dbReference type="GO" id="GO:0005829">
    <property type="term" value="C:cytosol"/>
    <property type="evidence" value="ECO:0007669"/>
    <property type="project" value="TreeGrafter"/>
</dbReference>
<dbReference type="GO" id="GO:0016597">
    <property type="term" value="F:amino acid binding"/>
    <property type="evidence" value="ECO:0007669"/>
    <property type="project" value="InterPro"/>
</dbReference>
<dbReference type="GO" id="GO:0004070">
    <property type="term" value="F:aspartate carbamoyltransferase activity"/>
    <property type="evidence" value="ECO:0007669"/>
    <property type="project" value="UniProtKB-UniRule"/>
</dbReference>
<dbReference type="GO" id="GO:0006207">
    <property type="term" value="P:'de novo' pyrimidine nucleobase biosynthetic process"/>
    <property type="evidence" value="ECO:0007669"/>
    <property type="project" value="InterPro"/>
</dbReference>
<dbReference type="GO" id="GO:0044205">
    <property type="term" value="P:'de novo' UMP biosynthetic process"/>
    <property type="evidence" value="ECO:0007669"/>
    <property type="project" value="UniProtKB-UniRule"/>
</dbReference>
<dbReference type="GO" id="GO:0006520">
    <property type="term" value="P:amino acid metabolic process"/>
    <property type="evidence" value="ECO:0007669"/>
    <property type="project" value="InterPro"/>
</dbReference>
<dbReference type="FunFam" id="3.40.50.1370:FF:000011">
    <property type="entry name" value="Aspartate carbamoyltransferase"/>
    <property type="match status" value="1"/>
</dbReference>
<dbReference type="Gene3D" id="3.40.50.1370">
    <property type="entry name" value="Aspartate/ornithine carbamoyltransferase"/>
    <property type="match status" value="2"/>
</dbReference>
<dbReference type="HAMAP" id="MF_00001">
    <property type="entry name" value="Asp_carb_tr"/>
    <property type="match status" value="1"/>
</dbReference>
<dbReference type="InterPro" id="IPR006132">
    <property type="entry name" value="Asp/Orn_carbamoyltranf_P-bd"/>
</dbReference>
<dbReference type="InterPro" id="IPR006130">
    <property type="entry name" value="Asp/Orn_carbamoylTrfase"/>
</dbReference>
<dbReference type="InterPro" id="IPR036901">
    <property type="entry name" value="Asp/Orn_carbamoylTrfase_sf"/>
</dbReference>
<dbReference type="InterPro" id="IPR002082">
    <property type="entry name" value="Asp_carbamoyltransf"/>
</dbReference>
<dbReference type="InterPro" id="IPR006131">
    <property type="entry name" value="Asp_carbamoyltransf_Asp/Orn-bd"/>
</dbReference>
<dbReference type="NCBIfam" id="TIGR00670">
    <property type="entry name" value="asp_carb_tr"/>
    <property type="match status" value="1"/>
</dbReference>
<dbReference type="NCBIfam" id="NF002032">
    <property type="entry name" value="PRK00856.1"/>
    <property type="match status" value="1"/>
</dbReference>
<dbReference type="PANTHER" id="PTHR45753:SF6">
    <property type="entry name" value="ASPARTATE CARBAMOYLTRANSFERASE"/>
    <property type="match status" value="1"/>
</dbReference>
<dbReference type="PANTHER" id="PTHR45753">
    <property type="entry name" value="ORNITHINE CARBAMOYLTRANSFERASE, MITOCHONDRIAL"/>
    <property type="match status" value="1"/>
</dbReference>
<dbReference type="Pfam" id="PF00185">
    <property type="entry name" value="OTCace"/>
    <property type="match status" value="1"/>
</dbReference>
<dbReference type="Pfam" id="PF02729">
    <property type="entry name" value="OTCace_N"/>
    <property type="match status" value="1"/>
</dbReference>
<dbReference type="PRINTS" id="PR00100">
    <property type="entry name" value="AOTCASE"/>
</dbReference>
<dbReference type="PRINTS" id="PR00101">
    <property type="entry name" value="ATCASE"/>
</dbReference>
<dbReference type="SUPFAM" id="SSF53671">
    <property type="entry name" value="Aspartate/ornithine carbamoyltransferase"/>
    <property type="match status" value="1"/>
</dbReference>
<dbReference type="PROSITE" id="PS00097">
    <property type="entry name" value="CARBAMOYLTRANSFERASE"/>
    <property type="match status" value="1"/>
</dbReference>
<gene>
    <name evidence="1" type="primary">pyrB</name>
    <name type="ordered locus">SPD_1133</name>
</gene>
<accession>Q04K46</accession>
<name>PYRB_STRP2</name>
<keyword id="KW-0665">Pyrimidine biosynthesis</keyword>
<keyword id="KW-1185">Reference proteome</keyword>
<keyword id="KW-0808">Transferase</keyword>
<comment type="function">
    <text evidence="1">Catalyzes the condensation of carbamoyl phosphate and aspartate to form carbamoyl aspartate and inorganic phosphate, the committed step in the de novo pyrimidine nucleotide biosynthesis pathway.</text>
</comment>
<comment type="catalytic activity">
    <reaction evidence="1">
        <text>carbamoyl phosphate + L-aspartate = N-carbamoyl-L-aspartate + phosphate + H(+)</text>
        <dbReference type="Rhea" id="RHEA:20013"/>
        <dbReference type="ChEBI" id="CHEBI:15378"/>
        <dbReference type="ChEBI" id="CHEBI:29991"/>
        <dbReference type="ChEBI" id="CHEBI:32814"/>
        <dbReference type="ChEBI" id="CHEBI:43474"/>
        <dbReference type="ChEBI" id="CHEBI:58228"/>
        <dbReference type="EC" id="2.1.3.2"/>
    </reaction>
</comment>
<comment type="pathway">
    <text evidence="1">Pyrimidine metabolism; UMP biosynthesis via de novo pathway; (S)-dihydroorotate from bicarbonate: step 2/3.</text>
</comment>
<comment type="subunit">
    <text evidence="1">Heterododecamer (2C3:3R2) of six catalytic PyrB chains organized as two trimers (C3), and six regulatory PyrI chains organized as three dimers (R2).</text>
</comment>
<comment type="similarity">
    <text evidence="1">Belongs to the aspartate/ornithine carbamoyltransferase superfamily. ATCase family.</text>
</comment>
<sequence length="307" mass="34706">MSENQQALNHVVSMEDLTVDQVMKLIKRGIEFKNGAQIPYEDHPIVSNLFFEDSTRTHKSFEVAEIKLGLERLDFDVKTSSVNKGETLYDTILTLSALGVDVCVIRHPEVDYYRELIASPTITTSIINGGDGSGQHPSQSLLDLMTIYEEFGHFEGLKVAIAGDLDHSRVAKSNMQILKRLGSELFFAGPEEWRSQEFADYGKFVTIDEIIDQVDVMMFLRVQHERHDSGAVFSKEDYHAQHGLTQERYDRLKETAILMHPAPINRDVEIADHLVEAPKSRIVQQMTNGVFVRMAILESVLASRNAN</sequence>
<organism>
    <name type="scientific">Streptococcus pneumoniae serotype 2 (strain D39 / NCTC 7466)</name>
    <dbReference type="NCBI Taxonomy" id="373153"/>
    <lineage>
        <taxon>Bacteria</taxon>
        <taxon>Bacillati</taxon>
        <taxon>Bacillota</taxon>
        <taxon>Bacilli</taxon>
        <taxon>Lactobacillales</taxon>
        <taxon>Streptococcaceae</taxon>
        <taxon>Streptococcus</taxon>
    </lineage>
</organism>
<reference key="1">
    <citation type="journal article" date="2007" name="J. Bacteriol.">
        <title>Genome sequence of Avery's virulent serotype 2 strain D39 of Streptococcus pneumoniae and comparison with that of unencapsulated laboratory strain R6.</title>
        <authorList>
            <person name="Lanie J.A."/>
            <person name="Ng W.-L."/>
            <person name="Kazmierczak K.M."/>
            <person name="Andrzejewski T.M."/>
            <person name="Davidsen T.M."/>
            <person name="Wayne K.J."/>
            <person name="Tettelin H."/>
            <person name="Glass J.I."/>
            <person name="Winkler M.E."/>
        </authorList>
    </citation>
    <scope>NUCLEOTIDE SEQUENCE [LARGE SCALE GENOMIC DNA]</scope>
    <source>
        <strain>D39 / NCTC 7466</strain>
    </source>
</reference>
<evidence type="ECO:0000255" key="1">
    <source>
        <dbReference type="HAMAP-Rule" id="MF_00001"/>
    </source>
</evidence>
<proteinExistence type="inferred from homology"/>
<feature type="chain" id="PRO_0000321162" description="Aspartate carbamoyltransferase catalytic subunit">
    <location>
        <begin position="1"/>
        <end position="307"/>
    </location>
</feature>
<feature type="binding site" evidence="1">
    <location>
        <position position="56"/>
    </location>
    <ligand>
        <name>carbamoyl phosphate</name>
        <dbReference type="ChEBI" id="CHEBI:58228"/>
    </ligand>
</feature>
<feature type="binding site" evidence="1">
    <location>
        <position position="57"/>
    </location>
    <ligand>
        <name>carbamoyl phosphate</name>
        <dbReference type="ChEBI" id="CHEBI:58228"/>
    </ligand>
</feature>
<feature type="binding site" evidence="1">
    <location>
        <position position="84"/>
    </location>
    <ligand>
        <name>L-aspartate</name>
        <dbReference type="ChEBI" id="CHEBI:29991"/>
    </ligand>
</feature>
<feature type="binding site" evidence="1">
    <location>
        <position position="106"/>
    </location>
    <ligand>
        <name>carbamoyl phosphate</name>
        <dbReference type="ChEBI" id="CHEBI:58228"/>
    </ligand>
</feature>
<feature type="binding site" evidence="1">
    <location>
        <position position="136"/>
    </location>
    <ligand>
        <name>carbamoyl phosphate</name>
        <dbReference type="ChEBI" id="CHEBI:58228"/>
    </ligand>
</feature>
<feature type="binding site" evidence="1">
    <location>
        <position position="139"/>
    </location>
    <ligand>
        <name>carbamoyl phosphate</name>
        <dbReference type="ChEBI" id="CHEBI:58228"/>
    </ligand>
</feature>
<feature type="binding site" evidence="1">
    <location>
        <position position="169"/>
    </location>
    <ligand>
        <name>L-aspartate</name>
        <dbReference type="ChEBI" id="CHEBI:29991"/>
    </ligand>
</feature>
<feature type="binding site" evidence="1">
    <location>
        <position position="221"/>
    </location>
    <ligand>
        <name>L-aspartate</name>
        <dbReference type="ChEBI" id="CHEBI:29991"/>
    </ligand>
</feature>
<feature type="binding site" evidence="1">
    <location>
        <position position="262"/>
    </location>
    <ligand>
        <name>carbamoyl phosphate</name>
        <dbReference type="ChEBI" id="CHEBI:58228"/>
    </ligand>
</feature>
<feature type="binding site" evidence="1">
    <location>
        <position position="263"/>
    </location>
    <ligand>
        <name>carbamoyl phosphate</name>
        <dbReference type="ChEBI" id="CHEBI:58228"/>
    </ligand>
</feature>